<keyword id="KW-0007">Acetylation</keyword>
<keyword id="KW-0158">Chromosome</keyword>
<keyword id="KW-0238">DNA-binding</keyword>
<keyword id="KW-0488">Methylation</keyword>
<keyword id="KW-0544">Nucleosome core</keyword>
<keyword id="KW-0539">Nucleus</keyword>
<proteinExistence type="inferred from homology"/>
<protein>
    <recommendedName>
        <fullName>Histone H4</fullName>
    </recommendedName>
</protein>
<name>H4_MYTCA</name>
<sequence>MSGRGKGGKGLGKGGAKRHRKVLRDNIQGITKPAIRRLARRGGVKRISGLIYEETRGVLKVFLENVIRDAVTYTEHAKRKTVTAMDVVYALKRQGRTLYGFGG</sequence>
<reference key="1">
    <citation type="journal article" date="2004" name="J. Mol. Evol.">
        <title>Molecular evolutionary characterization of the mussel Mytilus histone multigene family: first record of a tandemly repeated unit of five histone genes containing an H1 subtype with 'orphon' features.</title>
        <authorList>
            <person name="Eirin-Lopez J.M."/>
            <person name="Ruiz F."/>
            <person name="Gonzalez-Tizon A.M."/>
            <person name="Martinez A."/>
            <person name="Sanchez L."/>
            <person name="Mendez J."/>
        </authorList>
    </citation>
    <scope>NUCLEOTIDE SEQUENCE [GENOMIC DNA]</scope>
</reference>
<accession>Q6WV73</accession>
<dbReference type="EMBL" id="AY267752">
    <property type="protein sequence ID" value="AAP94671.1"/>
    <property type="molecule type" value="Genomic_DNA"/>
</dbReference>
<dbReference type="SMR" id="Q6WV73"/>
<dbReference type="GO" id="GO:0000786">
    <property type="term" value="C:nucleosome"/>
    <property type="evidence" value="ECO:0007669"/>
    <property type="project" value="UniProtKB-KW"/>
</dbReference>
<dbReference type="GO" id="GO:0005634">
    <property type="term" value="C:nucleus"/>
    <property type="evidence" value="ECO:0007669"/>
    <property type="project" value="UniProtKB-SubCell"/>
</dbReference>
<dbReference type="GO" id="GO:0003677">
    <property type="term" value="F:DNA binding"/>
    <property type="evidence" value="ECO:0007669"/>
    <property type="project" value="UniProtKB-KW"/>
</dbReference>
<dbReference type="GO" id="GO:0046982">
    <property type="term" value="F:protein heterodimerization activity"/>
    <property type="evidence" value="ECO:0007669"/>
    <property type="project" value="InterPro"/>
</dbReference>
<dbReference type="GO" id="GO:0030527">
    <property type="term" value="F:structural constituent of chromatin"/>
    <property type="evidence" value="ECO:0007669"/>
    <property type="project" value="InterPro"/>
</dbReference>
<dbReference type="CDD" id="cd22912">
    <property type="entry name" value="HFD_H4"/>
    <property type="match status" value="1"/>
</dbReference>
<dbReference type="FunFam" id="1.10.20.10:FF:000002">
    <property type="entry name" value="Histone H4"/>
    <property type="match status" value="1"/>
</dbReference>
<dbReference type="Gene3D" id="1.10.20.10">
    <property type="entry name" value="Histone, subunit A"/>
    <property type="match status" value="1"/>
</dbReference>
<dbReference type="InterPro" id="IPR035425">
    <property type="entry name" value="CENP-T/H4_C"/>
</dbReference>
<dbReference type="InterPro" id="IPR009072">
    <property type="entry name" value="Histone-fold"/>
</dbReference>
<dbReference type="InterPro" id="IPR001951">
    <property type="entry name" value="Histone_H4"/>
</dbReference>
<dbReference type="InterPro" id="IPR019809">
    <property type="entry name" value="Histone_H4_CS"/>
</dbReference>
<dbReference type="InterPro" id="IPR004823">
    <property type="entry name" value="TAF_TATA-bd_Histone-like_dom"/>
</dbReference>
<dbReference type="PANTHER" id="PTHR10484">
    <property type="entry name" value="HISTONE H4"/>
    <property type="match status" value="1"/>
</dbReference>
<dbReference type="Pfam" id="PF15511">
    <property type="entry name" value="CENP-T_C"/>
    <property type="match status" value="1"/>
</dbReference>
<dbReference type="PRINTS" id="PR00623">
    <property type="entry name" value="HISTONEH4"/>
</dbReference>
<dbReference type="SMART" id="SM00417">
    <property type="entry name" value="H4"/>
    <property type="match status" value="1"/>
</dbReference>
<dbReference type="SMART" id="SM00803">
    <property type="entry name" value="TAF"/>
    <property type="match status" value="1"/>
</dbReference>
<dbReference type="SUPFAM" id="SSF47113">
    <property type="entry name" value="Histone-fold"/>
    <property type="match status" value="1"/>
</dbReference>
<dbReference type="PROSITE" id="PS00047">
    <property type="entry name" value="HISTONE_H4"/>
    <property type="match status" value="1"/>
</dbReference>
<comment type="function">
    <text>Core component of nucleosome. Nucleosomes wrap and compact DNA into chromatin, limiting DNA accessibility to the cellular machineries which require DNA as a template. Histones thereby play a central role in transcription regulation, DNA repair, DNA replication and chromosomal stability. DNA accessibility is regulated via a complex set of post-translational modifications of histones, also called histone code, and nucleosome remodeling.</text>
</comment>
<comment type="subunit">
    <text>The nucleosome is a histone octamer containing two molecules each of H2A, H2B, H3 and H4 assembled in one H3-H4 heterotetramer and two H2A-H2B heterodimers. The octamer wraps approximately 147 bp of DNA.</text>
</comment>
<comment type="subcellular location">
    <subcellularLocation>
        <location evidence="1">Nucleus</location>
    </subcellularLocation>
    <subcellularLocation>
        <location evidence="1">Chromosome</location>
    </subcellularLocation>
</comment>
<comment type="similarity">
    <text evidence="4">Belongs to the histone H4 family.</text>
</comment>
<organism>
    <name type="scientific">Mytilus californianus</name>
    <name type="common">California mussel</name>
    <dbReference type="NCBI Taxonomy" id="6549"/>
    <lineage>
        <taxon>Eukaryota</taxon>
        <taxon>Metazoa</taxon>
        <taxon>Spiralia</taxon>
        <taxon>Lophotrochozoa</taxon>
        <taxon>Mollusca</taxon>
        <taxon>Bivalvia</taxon>
        <taxon>Autobranchia</taxon>
        <taxon>Pteriomorphia</taxon>
        <taxon>Mytilida</taxon>
        <taxon>Mytiloidea</taxon>
        <taxon>Mytilidae</taxon>
        <taxon>Mytilinae</taxon>
        <taxon>Mytilus</taxon>
    </lineage>
</organism>
<feature type="initiator methionine" description="Removed" evidence="1">
    <location>
        <position position="1"/>
    </location>
</feature>
<feature type="chain" id="PRO_0000158331" description="Histone H4">
    <location>
        <begin position="2"/>
        <end position="103"/>
    </location>
</feature>
<feature type="DNA-binding region">
    <location>
        <begin position="17"/>
        <end position="21"/>
    </location>
</feature>
<feature type="region of interest" description="Disordered" evidence="3">
    <location>
        <begin position="1"/>
        <end position="20"/>
    </location>
</feature>
<feature type="compositionally biased region" description="Gly residues" evidence="3">
    <location>
        <begin position="1"/>
        <end position="14"/>
    </location>
</feature>
<feature type="modified residue" description="N-acetylserine" evidence="1">
    <location>
        <position position="2"/>
    </location>
</feature>
<feature type="modified residue" description="N6-acetyl-N6-methyllysine; alternate" evidence="2">
    <location>
        <position position="6"/>
    </location>
</feature>
<feature type="modified residue" description="N6-acetyl-N6-methyllysine; alternate" evidence="2">
    <location>
        <position position="13"/>
    </location>
</feature>
<feature type="modified residue" description="N6-acetyllysine" evidence="1">
    <location>
        <position position="17"/>
    </location>
</feature>
<feature type="modified residue" description="N6-methyllysine" evidence="1">
    <location>
        <position position="21"/>
    </location>
</feature>
<evidence type="ECO:0000250" key="1"/>
<evidence type="ECO:0000250" key="2">
    <source>
        <dbReference type="UniProtKB" id="P62805"/>
    </source>
</evidence>
<evidence type="ECO:0000256" key="3">
    <source>
        <dbReference type="SAM" id="MobiDB-lite"/>
    </source>
</evidence>
<evidence type="ECO:0000305" key="4"/>